<accession>Q54ML8</accession>
<dbReference type="EMBL" id="AAFI02000082">
    <property type="protein sequence ID" value="EAL64469.1"/>
    <property type="molecule type" value="Genomic_DNA"/>
</dbReference>
<dbReference type="RefSeq" id="XP_637972.1">
    <property type="nucleotide sequence ID" value="XM_632880.1"/>
</dbReference>
<dbReference type="SMR" id="Q54ML8"/>
<dbReference type="FunCoup" id="Q54ML8">
    <property type="interactions" value="610"/>
</dbReference>
<dbReference type="PaxDb" id="44689-DDB0186719"/>
<dbReference type="EnsemblProtists" id="EAL64469">
    <property type="protein sequence ID" value="EAL64469"/>
    <property type="gene ID" value="DDB_G0285869"/>
</dbReference>
<dbReference type="GeneID" id="8625324"/>
<dbReference type="KEGG" id="ddi:DDB_G0285869"/>
<dbReference type="dictyBase" id="DDB_G0285869"/>
<dbReference type="VEuPathDB" id="AmoebaDB:DDB_G0285869"/>
<dbReference type="eggNOG" id="ENOG502RFZ4">
    <property type="taxonomic scope" value="Eukaryota"/>
</dbReference>
<dbReference type="HOGENOM" id="CLU_635265_0_0_1"/>
<dbReference type="InParanoid" id="Q54ML8"/>
<dbReference type="OMA" id="QNLNQYH"/>
<dbReference type="PRO" id="PR:Q54ML8"/>
<dbReference type="Proteomes" id="UP000002195">
    <property type="component" value="Chromosome 4"/>
</dbReference>
<dbReference type="GO" id="GO:0005737">
    <property type="term" value="C:cytoplasm"/>
    <property type="evidence" value="ECO:0000318"/>
    <property type="project" value="GO_Central"/>
</dbReference>
<gene>
    <name type="ORF">DDB_G0285869</name>
</gene>
<name>Y6719_DICDI</name>
<keyword id="KW-0175">Coiled coil</keyword>
<keyword id="KW-1185">Reference proteome</keyword>
<sequence length="432" mass="47328">MAIGDKRKKNRKNKQNKKNKNDNELILLHNTNNKLINSNSLVNSNNKNNNNKNGNGGGVNVMVNQCYNVLNGSFLFGSFFNKFDVLFNYLKSFLTIQKQSLNVNKLTDSNITISQKDNITFSTNSNNNNNSTNGNSNSPSIIIQQQQQHHHFNESQSSNNNNNNGSSLSSLGGSYITVDDLNDQLKIVQLEQKIVNLEKEIQRMRNEQNQIHKQNLNQYHELLKQIINAASLIQQQPTSIIQQPPQPFVAPPPPPPPPPPMVFKPKPIVVQPVSTPSSSSNSLASKKSNGVPQFSISMADITGVKLRKTSSKFAQSNSSPSRVNGSPARNRVVTSPAGIKKSPFKRVLTPVKKSATTTTTSSSSNNATTTTAKGSTSTPLKDITNSNNIKNSVLSPKSITKPNTPSNIIFSPLSNNNNNASPYKPLTISTLR</sequence>
<evidence type="ECO:0000255" key="1"/>
<evidence type="ECO:0000256" key="2">
    <source>
        <dbReference type="SAM" id="MobiDB-lite"/>
    </source>
</evidence>
<proteinExistence type="predicted"/>
<feature type="chain" id="PRO_0000348498" description="Putative uncharacterized protein DDB_G0285869">
    <location>
        <begin position="1"/>
        <end position="432"/>
    </location>
</feature>
<feature type="region of interest" description="Disordered" evidence="2">
    <location>
        <begin position="1"/>
        <end position="23"/>
    </location>
</feature>
<feature type="region of interest" description="Disordered" evidence="2">
    <location>
        <begin position="37"/>
        <end position="56"/>
    </location>
</feature>
<feature type="region of interest" description="Disordered" evidence="2">
    <location>
        <begin position="122"/>
        <end position="168"/>
    </location>
</feature>
<feature type="region of interest" description="Disordered" evidence="2">
    <location>
        <begin position="270"/>
        <end position="290"/>
    </location>
</feature>
<feature type="region of interest" description="Disordered" evidence="2">
    <location>
        <begin position="310"/>
        <end position="432"/>
    </location>
</feature>
<feature type="coiled-coil region" evidence="1">
    <location>
        <begin position="181"/>
        <end position="226"/>
    </location>
</feature>
<feature type="compositionally biased region" description="Basic residues" evidence="2">
    <location>
        <begin position="1"/>
        <end position="18"/>
    </location>
</feature>
<feature type="compositionally biased region" description="Low complexity" evidence="2">
    <location>
        <begin position="37"/>
        <end position="53"/>
    </location>
</feature>
<feature type="compositionally biased region" description="Low complexity" evidence="2">
    <location>
        <begin position="122"/>
        <end position="147"/>
    </location>
</feature>
<feature type="compositionally biased region" description="Low complexity" evidence="2">
    <location>
        <begin position="154"/>
        <end position="168"/>
    </location>
</feature>
<feature type="compositionally biased region" description="Low complexity" evidence="2">
    <location>
        <begin position="274"/>
        <end position="288"/>
    </location>
</feature>
<feature type="compositionally biased region" description="Polar residues" evidence="2">
    <location>
        <begin position="311"/>
        <end position="324"/>
    </location>
</feature>
<feature type="compositionally biased region" description="Low complexity" evidence="2">
    <location>
        <begin position="352"/>
        <end position="378"/>
    </location>
</feature>
<feature type="compositionally biased region" description="Polar residues" evidence="2">
    <location>
        <begin position="383"/>
        <end position="414"/>
    </location>
</feature>
<reference key="1">
    <citation type="journal article" date="2005" name="Nature">
        <title>The genome of the social amoeba Dictyostelium discoideum.</title>
        <authorList>
            <person name="Eichinger L."/>
            <person name="Pachebat J.A."/>
            <person name="Gloeckner G."/>
            <person name="Rajandream M.A."/>
            <person name="Sucgang R."/>
            <person name="Berriman M."/>
            <person name="Song J."/>
            <person name="Olsen R."/>
            <person name="Szafranski K."/>
            <person name="Xu Q."/>
            <person name="Tunggal B."/>
            <person name="Kummerfeld S."/>
            <person name="Madera M."/>
            <person name="Konfortov B.A."/>
            <person name="Rivero F."/>
            <person name="Bankier A.T."/>
            <person name="Lehmann R."/>
            <person name="Hamlin N."/>
            <person name="Davies R."/>
            <person name="Gaudet P."/>
            <person name="Fey P."/>
            <person name="Pilcher K."/>
            <person name="Chen G."/>
            <person name="Saunders D."/>
            <person name="Sodergren E.J."/>
            <person name="Davis P."/>
            <person name="Kerhornou A."/>
            <person name="Nie X."/>
            <person name="Hall N."/>
            <person name="Anjard C."/>
            <person name="Hemphill L."/>
            <person name="Bason N."/>
            <person name="Farbrother P."/>
            <person name="Desany B."/>
            <person name="Just E."/>
            <person name="Morio T."/>
            <person name="Rost R."/>
            <person name="Churcher C.M."/>
            <person name="Cooper J."/>
            <person name="Haydock S."/>
            <person name="van Driessche N."/>
            <person name="Cronin A."/>
            <person name="Goodhead I."/>
            <person name="Muzny D.M."/>
            <person name="Mourier T."/>
            <person name="Pain A."/>
            <person name="Lu M."/>
            <person name="Harper D."/>
            <person name="Lindsay R."/>
            <person name="Hauser H."/>
            <person name="James K.D."/>
            <person name="Quiles M."/>
            <person name="Madan Babu M."/>
            <person name="Saito T."/>
            <person name="Buchrieser C."/>
            <person name="Wardroper A."/>
            <person name="Felder M."/>
            <person name="Thangavelu M."/>
            <person name="Johnson D."/>
            <person name="Knights A."/>
            <person name="Loulseged H."/>
            <person name="Mungall K.L."/>
            <person name="Oliver K."/>
            <person name="Price C."/>
            <person name="Quail M.A."/>
            <person name="Urushihara H."/>
            <person name="Hernandez J."/>
            <person name="Rabbinowitsch E."/>
            <person name="Steffen D."/>
            <person name="Sanders M."/>
            <person name="Ma J."/>
            <person name="Kohara Y."/>
            <person name="Sharp S."/>
            <person name="Simmonds M.N."/>
            <person name="Spiegler S."/>
            <person name="Tivey A."/>
            <person name="Sugano S."/>
            <person name="White B."/>
            <person name="Walker D."/>
            <person name="Woodward J.R."/>
            <person name="Winckler T."/>
            <person name="Tanaka Y."/>
            <person name="Shaulsky G."/>
            <person name="Schleicher M."/>
            <person name="Weinstock G.M."/>
            <person name="Rosenthal A."/>
            <person name="Cox E.C."/>
            <person name="Chisholm R.L."/>
            <person name="Gibbs R.A."/>
            <person name="Loomis W.F."/>
            <person name="Platzer M."/>
            <person name="Kay R.R."/>
            <person name="Williams J.G."/>
            <person name="Dear P.H."/>
            <person name="Noegel A.A."/>
            <person name="Barrell B.G."/>
            <person name="Kuspa A."/>
        </authorList>
    </citation>
    <scope>NUCLEOTIDE SEQUENCE [LARGE SCALE GENOMIC DNA]</scope>
    <source>
        <strain>AX4</strain>
    </source>
</reference>
<organism>
    <name type="scientific">Dictyostelium discoideum</name>
    <name type="common">Social amoeba</name>
    <dbReference type="NCBI Taxonomy" id="44689"/>
    <lineage>
        <taxon>Eukaryota</taxon>
        <taxon>Amoebozoa</taxon>
        <taxon>Evosea</taxon>
        <taxon>Eumycetozoa</taxon>
        <taxon>Dictyostelia</taxon>
        <taxon>Dictyosteliales</taxon>
        <taxon>Dictyosteliaceae</taxon>
        <taxon>Dictyostelium</taxon>
    </lineage>
</organism>
<protein>
    <recommendedName>
        <fullName>Putative uncharacterized protein DDB_G0285869</fullName>
    </recommendedName>
</protein>